<accession>B7KNU7</accession>
<keyword id="KW-0963">Cytoplasm</keyword>
<keyword id="KW-0378">Hydrolase</keyword>
<keyword id="KW-0694">RNA-binding</keyword>
<keyword id="KW-0820">tRNA-binding</keyword>
<name>PTH_METC4</name>
<reference key="1">
    <citation type="submission" date="2008-12" db="EMBL/GenBank/DDBJ databases">
        <title>Complete sequence of chromosome of Methylobacterium chloromethanicum CM4.</title>
        <authorList>
            <consortium name="US DOE Joint Genome Institute"/>
            <person name="Lucas S."/>
            <person name="Copeland A."/>
            <person name="Lapidus A."/>
            <person name="Glavina del Rio T."/>
            <person name="Dalin E."/>
            <person name="Tice H."/>
            <person name="Bruce D."/>
            <person name="Goodwin L."/>
            <person name="Pitluck S."/>
            <person name="Chertkov O."/>
            <person name="Brettin T."/>
            <person name="Detter J.C."/>
            <person name="Han C."/>
            <person name="Larimer F."/>
            <person name="Land M."/>
            <person name="Hauser L."/>
            <person name="Kyrpides N."/>
            <person name="Mikhailova N."/>
            <person name="Marx C."/>
            <person name="Richardson P."/>
        </authorList>
    </citation>
    <scope>NUCLEOTIDE SEQUENCE [LARGE SCALE GENOMIC DNA]</scope>
    <source>
        <strain>CM4 / NCIMB 13688</strain>
    </source>
</reference>
<evidence type="ECO:0000255" key="1">
    <source>
        <dbReference type="HAMAP-Rule" id="MF_00083"/>
    </source>
</evidence>
<gene>
    <name evidence="1" type="primary">pth</name>
    <name type="ordered locus">Mchl_2697</name>
</gene>
<proteinExistence type="inferred from homology"/>
<feature type="chain" id="PRO_1000118397" description="Peptidyl-tRNA hydrolase">
    <location>
        <begin position="1"/>
        <end position="210"/>
    </location>
</feature>
<feature type="active site" description="Proton acceptor" evidence="1">
    <location>
        <position position="19"/>
    </location>
</feature>
<feature type="binding site" evidence="1">
    <location>
        <position position="14"/>
    </location>
    <ligand>
        <name>tRNA</name>
        <dbReference type="ChEBI" id="CHEBI:17843"/>
    </ligand>
</feature>
<feature type="binding site" evidence="1">
    <location>
        <position position="64"/>
    </location>
    <ligand>
        <name>tRNA</name>
        <dbReference type="ChEBI" id="CHEBI:17843"/>
    </ligand>
</feature>
<feature type="binding site" evidence="1">
    <location>
        <position position="66"/>
    </location>
    <ligand>
        <name>tRNA</name>
        <dbReference type="ChEBI" id="CHEBI:17843"/>
    </ligand>
</feature>
<feature type="binding site" evidence="1">
    <location>
        <position position="112"/>
    </location>
    <ligand>
        <name>tRNA</name>
        <dbReference type="ChEBI" id="CHEBI:17843"/>
    </ligand>
</feature>
<feature type="site" description="Discriminates between blocked and unblocked aminoacyl-tRNA" evidence="1">
    <location>
        <position position="9"/>
    </location>
</feature>
<feature type="site" description="Stabilizes the basic form of H active site to accept a proton" evidence="1">
    <location>
        <position position="91"/>
    </location>
</feature>
<protein>
    <recommendedName>
        <fullName evidence="1">Peptidyl-tRNA hydrolase</fullName>
        <shortName evidence="1">Pth</shortName>
        <ecNumber evidence="1">3.1.1.29</ecNumber>
    </recommendedName>
</protein>
<organism>
    <name type="scientific">Methylorubrum extorquens (strain CM4 / NCIMB 13688)</name>
    <name type="common">Methylobacterium extorquens</name>
    <dbReference type="NCBI Taxonomy" id="440085"/>
    <lineage>
        <taxon>Bacteria</taxon>
        <taxon>Pseudomonadati</taxon>
        <taxon>Pseudomonadota</taxon>
        <taxon>Alphaproteobacteria</taxon>
        <taxon>Hyphomicrobiales</taxon>
        <taxon>Methylobacteriaceae</taxon>
        <taxon>Methylorubrum</taxon>
    </lineage>
</organism>
<comment type="function">
    <text evidence="1">Hydrolyzes ribosome-free peptidyl-tRNAs (with 1 or more amino acids incorporated), which drop off the ribosome during protein synthesis, or as a result of ribosome stalling.</text>
</comment>
<comment type="function">
    <text evidence="1">Catalyzes the release of premature peptidyl moieties from peptidyl-tRNA molecules trapped in stalled 50S ribosomal subunits, and thus maintains levels of free tRNAs and 50S ribosomes.</text>
</comment>
<comment type="catalytic activity">
    <reaction evidence="1">
        <text>an N-acyl-L-alpha-aminoacyl-tRNA + H2O = an N-acyl-L-amino acid + a tRNA + H(+)</text>
        <dbReference type="Rhea" id="RHEA:54448"/>
        <dbReference type="Rhea" id="RHEA-COMP:10123"/>
        <dbReference type="Rhea" id="RHEA-COMP:13883"/>
        <dbReference type="ChEBI" id="CHEBI:15377"/>
        <dbReference type="ChEBI" id="CHEBI:15378"/>
        <dbReference type="ChEBI" id="CHEBI:59874"/>
        <dbReference type="ChEBI" id="CHEBI:78442"/>
        <dbReference type="ChEBI" id="CHEBI:138191"/>
        <dbReference type="EC" id="3.1.1.29"/>
    </reaction>
</comment>
<comment type="subunit">
    <text evidence="1">Monomer.</text>
</comment>
<comment type="subcellular location">
    <subcellularLocation>
        <location evidence="1">Cytoplasm</location>
    </subcellularLocation>
</comment>
<comment type="similarity">
    <text evidence="1">Belongs to the PTH family.</text>
</comment>
<sequence>MRLIVGLGNPGARYARNRHNIGFMAVDEIARVHRAAPFRRRFQGEAAEVMLGSERAILLKPQTFMNESGRSVGEAQRFFKIPLADVIVLHDELDLAPAKLRVKLGGGNAGHNGLRSITALCGNEYRRVRLGIGHPGDKALVHAYVLNDFAKSEEPWVEDLCRATADHAPLLAAGEDASFQNKVHLAMAGRGWETVKTPAEAGKAKARDAN</sequence>
<dbReference type="EC" id="3.1.1.29" evidence="1"/>
<dbReference type="EMBL" id="CP001298">
    <property type="protein sequence ID" value="ACK83536.1"/>
    <property type="molecule type" value="Genomic_DNA"/>
</dbReference>
<dbReference type="RefSeq" id="WP_003598133.1">
    <property type="nucleotide sequence ID" value="NC_011757.1"/>
</dbReference>
<dbReference type="SMR" id="B7KNU7"/>
<dbReference type="GeneID" id="72990105"/>
<dbReference type="KEGG" id="mch:Mchl_2697"/>
<dbReference type="HOGENOM" id="CLU_062456_1_0_5"/>
<dbReference type="Proteomes" id="UP000002385">
    <property type="component" value="Chromosome"/>
</dbReference>
<dbReference type="GO" id="GO:0005737">
    <property type="term" value="C:cytoplasm"/>
    <property type="evidence" value="ECO:0007669"/>
    <property type="project" value="UniProtKB-SubCell"/>
</dbReference>
<dbReference type="GO" id="GO:0004045">
    <property type="term" value="F:peptidyl-tRNA hydrolase activity"/>
    <property type="evidence" value="ECO:0007669"/>
    <property type="project" value="UniProtKB-UniRule"/>
</dbReference>
<dbReference type="GO" id="GO:0000049">
    <property type="term" value="F:tRNA binding"/>
    <property type="evidence" value="ECO:0007669"/>
    <property type="project" value="UniProtKB-UniRule"/>
</dbReference>
<dbReference type="GO" id="GO:0006515">
    <property type="term" value="P:protein quality control for misfolded or incompletely synthesized proteins"/>
    <property type="evidence" value="ECO:0007669"/>
    <property type="project" value="UniProtKB-UniRule"/>
</dbReference>
<dbReference type="GO" id="GO:0072344">
    <property type="term" value="P:rescue of stalled ribosome"/>
    <property type="evidence" value="ECO:0007669"/>
    <property type="project" value="UniProtKB-UniRule"/>
</dbReference>
<dbReference type="CDD" id="cd00462">
    <property type="entry name" value="PTH"/>
    <property type="match status" value="1"/>
</dbReference>
<dbReference type="FunFam" id="3.40.50.1470:FF:000001">
    <property type="entry name" value="Peptidyl-tRNA hydrolase"/>
    <property type="match status" value="1"/>
</dbReference>
<dbReference type="Gene3D" id="3.40.50.1470">
    <property type="entry name" value="Peptidyl-tRNA hydrolase"/>
    <property type="match status" value="1"/>
</dbReference>
<dbReference type="HAMAP" id="MF_00083">
    <property type="entry name" value="Pept_tRNA_hydro_bact"/>
    <property type="match status" value="1"/>
</dbReference>
<dbReference type="InterPro" id="IPR001328">
    <property type="entry name" value="Pept_tRNA_hydro"/>
</dbReference>
<dbReference type="InterPro" id="IPR018171">
    <property type="entry name" value="Pept_tRNA_hydro_CS"/>
</dbReference>
<dbReference type="InterPro" id="IPR036416">
    <property type="entry name" value="Pept_tRNA_hydro_sf"/>
</dbReference>
<dbReference type="NCBIfam" id="TIGR00447">
    <property type="entry name" value="pth"/>
    <property type="match status" value="1"/>
</dbReference>
<dbReference type="PANTHER" id="PTHR17224">
    <property type="entry name" value="PEPTIDYL-TRNA HYDROLASE"/>
    <property type="match status" value="1"/>
</dbReference>
<dbReference type="PANTHER" id="PTHR17224:SF1">
    <property type="entry name" value="PEPTIDYL-TRNA HYDROLASE"/>
    <property type="match status" value="1"/>
</dbReference>
<dbReference type="Pfam" id="PF01195">
    <property type="entry name" value="Pept_tRNA_hydro"/>
    <property type="match status" value="1"/>
</dbReference>
<dbReference type="SUPFAM" id="SSF53178">
    <property type="entry name" value="Peptidyl-tRNA hydrolase-like"/>
    <property type="match status" value="1"/>
</dbReference>
<dbReference type="PROSITE" id="PS01195">
    <property type="entry name" value="PEPT_TRNA_HYDROL_1"/>
    <property type="match status" value="1"/>
</dbReference>
<dbReference type="PROSITE" id="PS01196">
    <property type="entry name" value="PEPT_TRNA_HYDROL_2"/>
    <property type="match status" value="1"/>
</dbReference>